<reference key="1">
    <citation type="submission" date="2000-01" db="EMBL/GenBank/DDBJ databases">
        <authorList>
            <person name="Goerlich D."/>
            <person name="Hartmann E."/>
        </authorList>
    </citation>
    <scope>NUCLEOTIDE SEQUENCE [MRNA]</scope>
</reference>
<reference key="2">
    <citation type="journal article" date="2000" name="Science">
        <title>The genome sequence of Drosophila melanogaster.</title>
        <authorList>
            <person name="Adams M.D."/>
            <person name="Celniker S.E."/>
            <person name="Holt R.A."/>
            <person name="Evans C.A."/>
            <person name="Gocayne J.D."/>
            <person name="Amanatides P.G."/>
            <person name="Scherer S.E."/>
            <person name="Li P.W."/>
            <person name="Hoskins R.A."/>
            <person name="Galle R.F."/>
            <person name="George R.A."/>
            <person name="Lewis S.E."/>
            <person name="Richards S."/>
            <person name="Ashburner M."/>
            <person name="Henderson S.N."/>
            <person name="Sutton G.G."/>
            <person name="Wortman J.R."/>
            <person name="Yandell M.D."/>
            <person name="Zhang Q."/>
            <person name="Chen L.X."/>
            <person name="Brandon R.C."/>
            <person name="Rogers Y.-H.C."/>
            <person name="Blazej R.G."/>
            <person name="Champe M."/>
            <person name="Pfeiffer B.D."/>
            <person name="Wan K.H."/>
            <person name="Doyle C."/>
            <person name="Baxter E.G."/>
            <person name="Helt G."/>
            <person name="Nelson C.R."/>
            <person name="Miklos G.L.G."/>
            <person name="Abril J.F."/>
            <person name="Agbayani A."/>
            <person name="An H.-J."/>
            <person name="Andrews-Pfannkoch C."/>
            <person name="Baldwin D."/>
            <person name="Ballew R.M."/>
            <person name="Basu A."/>
            <person name="Baxendale J."/>
            <person name="Bayraktaroglu L."/>
            <person name="Beasley E.M."/>
            <person name="Beeson K.Y."/>
            <person name="Benos P.V."/>
            <person name="Berman B.P."/>
            <person name="Bhandari D."/>
            <person name="Bolshakov S."/>
            <person name="Borkova D."/>
            <person name="Botchan M.R."/>
            <person name="Bouck J."/>
            <person name="Brokstein P."/>
            <person name="Brottier P."/>
            <person name="Burtis K.C."/>
            <person name="Busam D.A."/>
            <person name="Butler H."/>
            <person name="Cadieu E."/>
            <person name="Center A."/>
            <person name="Chandra I."/>
            <person name="Cherry J.M."/>
            <person name="Cawley S."/>
            <person name="Dahlke C."/>
            <person name="Davenport L.B."/>
            <person name="Davies P."/>
            <person name="de Pablos B."/>
            <person name="Delcher A."/>
            <person name="Deng Z."/>
            <person name="Mays A.D."/>
            <person name="Dew I."/>
            <person name="Dietz S.M."/>
            <person name="Dodson K."/>
            <person name="Doup L.E."/>
            <person name="Downes M."/>
            <person name="Dugan-Rocha S."/>
            <person name="Dunkov B.C."/>
            <person name="Dunn P."/>
            <person name="Durbin K.J."/>
            <person name="Evangelista C.C."/>
            <person name="Ferraz C."/>
            <person name="Ferriera S."/>
            <person name="Fleischmann W."/>
            <person name="Fosler C."/>
            <person name="Gabrielian A.E."/>
            <person name="Garg N.S."/>
            <person name="Gelbart W.M."/>
            <person name="Glasser K."/>
            <person name="Glodek A."/>
            <person name="Gong F."/>
            <person name="Gorrell J.H."/>
            <person name="Gu Z."/>
            <person name="Guan P."/>
            <person name="Harris M."/>
            <person name="Harris N.L."/>
            <person name="Harvey D.A."/>
            <person name="Heiman T.J."/>
            <person name="Hernandez J.R."/>
            <person name="Houck J."/>
            <person name="Hostin D."/>
            <person name="Houston K.A."/>
            <person name="Howland T.J."/>
            <person name="Wei M.-H."/>
            <person name="Ibegwam C."/>
            <person name="Jalali M."/>
            <person name="Kalush F."/>
            <person name="Karpen G.H."/>
            <person name="Ke Z."/>
            <person name="Kennison J.A."/>
            <person name="Ketchum K.A."/>
            <person name="Kimmel B.E."/>
            <person name="Kodira C.D."/>
            <person name="Kraft C.L."/>
            <person name="Kravitz S."/>
            <person name="Kulp D."/>
            <person name="Lai Z."/>
            <person name="Lasko P."/>
            <person name="Lei Y."/>
            <person name="Levitsky A.A."/>
            <person name="Li J.H."/>
            <person name="Li Z."/>
            <person name="Liang Y."/>
            <person name="Lin X."/>
            <person name="Liu X."/>
            <person name="Mattei B."/>
            <person name="McIntosh T.C."/>
            <person name="McLeod M.P."/>
            <person name="McPherson D."/>
            <person name="Merkulov G."/>
            <person name="Milshina N.V."/>
            <person name="Mobarry C."/>
            <person name="Morris J."/>
            <person name="Moshrefi A."/>
            <person name="Mount S.M."/>
            <person name="Moy M."/>
            <person name="Murphy B."/>
            <person name="Murphy L."/>
            <person name="Muzny D.M."/>
            <person name="Nelson D.L."/>
            <person name="Nelson D.R."/>
            <person name="Nelson K.A."/>
            <person name="Nixon K."/>
            <person name="Nusskern D.R."/>
            <person name="Pacleb J.M."/>
            <person name="Palazzolo M."/>
            <person name="Pittman G.S."/>
            <person name="Pan S."/>
            <person name="Pollard J."/>
            <person name="Puri V."/>
            <person name="Reese M.G."/>
            <person name="Reinert K."/>
            <person name="Remington K."/>
            <person name="Saunders R.D.C."/>
            <person name="Scheeler F."/>
            <person name="Shen H."/>
            <person name="Shue B.C."/>
            <person name="Siden-Kiamos I."/>
            <person name="Simpson M."/>
            <person name="Skupski M.P."/>
            <person name="Smith T.J."/>
            <person name="Spier E."/>
            <person name="Spradling A.C."/>
            <person name="Stapleton M."/>
            <person name="Strong R."/>
            <person name="Sun E."/>
            <person name="Svirskas R."/>
            <person name="Tector C."/>
            <person name="Turner R."/>
            <person name="Venter E."/>
            <person name="Wang A.H."/>
            <person name="Wang X."/>
            <person name="Wang Z.-Y."/>
            <person name="Wassarman D.A."/>
            <person name="Weinstock G.M."/>
            <person name="Weissenbach J."/>
            <person name="Williams S.M."/>
            <person name="Woodage T."/>
            <person name="Worley K.C."/>
            <person name="Wu D."/>
            <person name="Yang S."/>
            <person name="Yao Q.A."/>
            <person name="Ye J."/>
            <person name="Yeh R.-F."/>
            <person name="Zaveri J.S."/>
            <person name="Zhan M."/>
            <person name="Zhang G."/>
            <person name="Zhao Q."/>
            <person name="Zheng L."/>
            <person name="Zheng X.H."/>
            <person name="Zhong F.N."/>
            <person name="Zhong W."/>
            <person name="Zhou X."/>
            <person name="Zhu S.C."/>
            <person name="Zhu X."/>
            <person name="Smith H.O."/>
            <person name="Gibbs R.A."/>
            <person name="Myers E.W."/>
            <person name="Rubin G.M."/>
            <person name="Venter J.C."/>
        </authorList>
    </citation>
    <scope>NUCLEOTIDE SEQUENCE [LARGE SCALE GENOMIC DNA]</scope>
    <source>
        <strain>Berkeley</strain>
    </source>
</reference>
<reference key="3">
    <citation type="journal article" date="2002" name="Genome Biol.">
        <title>Annotation of the Drosophila melanogaster euchromatic genome: a systematic review.</title>
        <authorList>
            <person name="Misra S."/>
            <person name="Crosby M.A."/>
            <person name="Mungall C.J."/>
            <person name="Matthews B.B."/>
            <person name="Campbell K.S."/>
            <person name="Hradecky P."/>
            <person name="Huang Y."/>
            <person name="Kaminker J.S."/>
            <person name="Millburn G.H."/>
            <person name="Prochnik S.E."/>
            <person name="Smith C.D."/>
            <person name="Tupy J.L."/>
            <person name="Whitfield E.J."/>
            <person name="Bayraktaroglu L."/>
            <person name="Berman B.P."/>
            <person name="Bettencourt B.R."/>
            <person name="Celniker S.E."/>
            <person name="de Grey A.D.N.J."/>
            <person name="Drysdale R.A."/>
            <person name="Harris N.L."/>
            <person name="Richter J."/>
            <person name="Russo S."/>
            <person name="Schroeder A.J."/>
            <person name="Shu S.Q."/>
            <person name="Stapleton M."/>
            <person name="Yamada C."/>
            <person name="Ashburner M."/>
            <person name="Gelbart W.M."/>
            <person name="Rubin G.M."/>
            <person name="Lewis S.E."/>
        </authorList>
    </citation>
    <scope>GENOME REANNOTATION</scope>
    <source>
        <strain>Berkeley</strain>
    </source>
</reference>
<reference key="4">
    <citation type="submission" date="2005-03" db="EMBL/GenBank/DDBJ databases">
        <authorList>
            <person name="Stapleton M."/>
            <person name="Carlson J.W."/>
            <person name="Chavez C."/>
            <person name="Frise E."/>
            <person name="George R.A."/>
            <person name="Pacleb J.M."/>
            <person name="Park S."/>
            <person name="Wan K.H."/>
            <person name="Yu C."/>
            <person name="Rubin G.M."/>
            <person name="Celniker S.E."/>
        </authorList>
    </citation>
    <scope>NUCLEOTIDE SEQUENCE [MRNA]</scope>
    <source>
        <strain>Berkeley</strain>
        <tissue>Embryo</tissue>
    </source>
</reference>
<gene>
    <name type="primary">Ranbp16</name>
    <name type="ORF">CG33180</name>
</gene>
<evidence type="ECO:0000250" key="1"/>
<evidence type="ECO:0000250" key="2">
    <source>
        <dbReference type="UniProtKB" id="Q9UIA9"/>
    </source>
</evidence>
<evidence type="ECO:0000305" key="3"/>
<dbReference type="EMBL" id="AF222744">
    <property type="protein sequence ID" value="AAG44254.1"/>
    <property type="molecule type" value="mRNA"/>
</dbReference>
<dbReference type="EMBL" id="AE014298">
    <property type="protein sequence ID" value="AAF48541.3"/>
    <property type="molecule type" value="Genomic_DNA"/>
</dbReference>
<dbReference type="EMBL" id="BT021400">
    <property type="protein sequence ID" value="AAX33548.1"/>
    <property type="molecule type" value="mRNA"/>
</dbReference>
<dbReference type="RefSeq" id="NP_001285308.1">
    <property type="nucleotide sequence ID" value="NM_001298379.1"/>
</dbReference>
<dbReference type="RefSeq" id="NP_788913.2">
    <property type="nucleotide sequence ID" value="NM_176740.4"/>
</dbReference>
<dbReference type="SMR" id="Q9GQN0"/>
<dbReference type="BioGRID" id="72923">
    <property type="interactions" value="1"/>
</dbReference>
<dbReference type="FunCoup" id="Q9GQN0">
    <property type="interactions" value="3097"/>
</dbReference>
<dbReference type="IntAct" id="Q9GQN0">
    <property type="interactions" value="2"/>
</dbReference>
<dbReference type="STRING" id="7227.FBpp0292664"/>
<dbReference type="PaxDb" id="7227-FBpp0292664"/>
<dbReference type="EnsemblMetazoa" id="FBtr0074162">
    <property type="protein sequence ID" value="FBpp0089083"/>
    <property type="gene ID" value="FBgn0053180"/>
</dbReference>
<dbReference type="EnsemblMetazoa" id="FBtr0340311">
    <property type="protein sequence ID" value="FBpp0309272"/>
    <property type="gene ID" value="FBgn0053180"/>
</dbReference>
<dbReference type="GeneID" id="118436"/>
<dbReference type="KEGG" id="dme:Dmel_CG33180"/>
<dbReference type="UCSC" id="CG33180-RB">
    <property type="organism name" value="d. melanogaster"/>
</dbReference>
<dbReference type="AGR" id="FB:FBgn0053180"/>
<dbReference type="CTD" id="118436"/>
<dbReference type="FlyBase" id="FBgn0053180">
    <property type="gene designation" value="Ranbp16"/>
</dbReference>
<dbReference type="VEuPathDB" id="VectorBase:FBgn0053180"/>
<dbReference type="eggNOG" id="KOG1410">
    <property type="taxonomic scope" value="Eukaryota"/>
</dbReference>
<dbReference type="InParanoid" id="Q9GQN0"/>
<dbReference type="OrthoDB" id="244158at2759"/>
<dbReference type="PhylomeDB" id="Q9GQN0"/>
<dbReference type="BioGRID-ORCS" id="118436">
    <property type="hits" value="0 hits in 3 CRISPR screens"/>
</dbReference>
<dbReference type="ChiTaRS" id="Ranbp16">
    <property type="organism name" value="fly"/>
</dbReference>
<dbReference type="GenomeRNAi" id="118436"/>
<dbReference type="PRO" id="PR:Q9GQN0"/>
<dbReference type="Proteomes" id="UP000000803">
    <property type="component" value="Chromosome X"/>
</dbReference>
<dbReference type="Bgee" id="FBgn0053180">
    <property type="expression patterns" value="Expressed in lamina monopolar neuron L2 (Drosophila) in insect head and 232 other cell types or tissues"/>
</dbReference>
<dbReference type="ExpressionAtlas" id="Q9GQN0">
    <property type="expression patterns" value="baseline and differential"/>
</dbReference>
<dbReference type="GO" id="GO:0005737">
    <property type="term" value="C:cytoplasm"/>
    <property type="evidence" value="ECO:0000250"/>
    <property type="project" value="UniProtKB"/>
</dbReference>
<dbReference type="GO" id="GO:0005643">
    <property type="term" value="C:nuclear pore"/>
    <property type="evidence" value="ECO:0000250"/>
    <property type="project" value="UniProtKB"/>
</dbReference>
<dbReference type="GO" id="GO:0005634">
    <property type="term" value="C:nucleus"/>
    <property type="evidence" value="ECO:0000250"/>
    <property type="project" value="UniProtKB"/>
</dbReference>
<dbReference type="GO" id="GO:0005049">
    <property type="term" value="F:nuclear export signal receptor activity"/>
    <property type="evidence" value="ECO:0000250"/>
    <property type="project" value="UniProtKB"/>
</dbReference>
<dbReference type="GO" id="GO:0031267">
    <property type="term" value="F:small GTPase binding"/>
    <property type="evidence" value="ECO:0007669"/>
    <property type="project" value="InterPro"/>
</dbReference>
<dbReference type="GO" id="GO:0006611">
    <property type="term" value="P:protein export from nucleus"/>
    <property type="evidence" value="ECO:0000250"/>
    <property type="project" value="UniProtKB"/>
</dbReference>
<dbReference type="FunFam" id="1.25.10.10:FF:000042">
    <property type="entry name" value="exportin-7 isoform X1"/>
    <property type="match status" value="1"/>
</dbReference>
<dbReference type="Gene3D" id="1.25.10.10">
    <property type="entry name" value="Leucine-rich Repeat Variant"/>
    <property type="match status" value="2"/>
</dbReference>
<dbReference type="InterPro" id="IPR011989">
    <property type="entry name" value="ARM-like"/>
</dbReference>
<dbReference type="InterPro" id="IPR016024">
    <property type="entry name" value="ARM-type_fold"/>
</dbReference>
<dbReference type="InterPro" id="IPR001494">
    <property type="entry name" value="Importin-beta_N"/>
</dbReference>
<dbReference type="InterPro" id="IPR044189">
    <property type="entry name" value="XPO4/7-like"/>
</dbReference>
<dbReference type="PANTHER" id="PTHR12596">
    <property type="entry name" value="EXPORTIN 4,7-RELATED"/>
    <property type="match status" value="1"/>
</dbReference>
<dbReference type="PANTHER" id="PTHR12596:SF2">
    <property type="entry name" value="EXPORTIN-7 ISOFORM X1"/>
    <property type="match status" value="1"/>
</dbReference>
<dbReference type="Pfam" id="PF03810">
    <property type="entry name" value="IBN_N"/>
    <property type="match status" value="1"/>
</dbReference>
<dbReference type="SMART" id="SM00913">
    <property type="entry name" value="IBN_N"/>
    <property type="match status" value="1"/>
</dbReference>
<dbReference type="SUPFAM" id="SSF48371">
    <property type="entry name" value="ARM repeat"/>
    <property type="match status" value="1"/>
</dbReference>
<comment type="function">
    <text evidence="1">May function as a nuclear transport receptor.</text>
</comment>
<comment type="subunit">
    <text evidence="1">Binds to nucleoporins and the GTP-bound form of Ran.</text>
</comment>
<comment type="subcellular location">
    <subcellularLocation>
        <location evidence="2">Cytoplasm</location>
    </subcellularLocation>
    <subcellularLocation>
        <location evidence="2">Nucleus</location>
    </subcellularLocation>
</comment>
<comment type="similarity">
    <text evidence="3">Belongs to the exportin family.</text>
</comment>
<sequence length="1098" mass="125533">MDIQQLEVLCKQLYEATDIRIRSEAEKALVTFVSSQDALPKCQLLLQRADSSYAQLLAASTLTKLIQGLSLQERIDIRSYALNYLATVPNLQHFVVQALVSLLAKLTKYGWFDSYKEEMVFQNLLEDVKKFLQGSVEHCTIGVQILSQLVCEMNSVVEMDVQVSFSKMRKIATSFRDQQLLETFLLSCSLLVSARDNSKNISFMDESQQALISHVLRLTKNCLSFDFIGSSTDESADDMNNVQIPTAWRPAFLDSNTLKLFFDLYQILPNGLASYSISCLVQITSVRRSLFNNSERTKFLTHLVEGVKDILTTLHGLSDPDNYHEFCRLLARLKSNYQLGELIAVPCYPEAIQLIAKFTVESLHLWLFAPNSVHYLLTLWQRMVASVPYVKSPDPHLLGTYTPEVIKAYIESRLDAVPVIIRDNLDDPLDDFCMVQQQLEQLSVIERCEYNKTCNLLVQHFDQKAREYENLLQTPNANSIDITIHELQLTWLVYIIGSAIVGRLTVATSDEHDTMDAELVIRVLQLMTLTDARLPQAGCEKLELAILSFLDQVRKMHSSEQAQKANLNKRLSEVFGLTDEQMLLSFINRKIITNLKFWGRSESIITKTLMLLSELSVHFNSVRKLARLEEVQFMLTHHTSEHFPFLGTNSSLSEMRCRTMFYTSLGRLLMFDLGEDEERFYNFLEPLTNQFESLGSVMMDNNIFSNEEAKKVIIGLARDLRGLALPLNARIQYTMLFEWLYYADYLPILLRAMDLWAHDPAVTTPILKLFAELVHCRTQRLAGNVSSPMGILLFREASKLICIYGNRILHQEVPRERLYPMRLKGIAICFLILKNSLGGNYVNCGVFKLYGDDTLDSVLNIIAKLILTIEQRDLIEYPKLSTAYYNLLNCLSQDHVSYLAALEPAAFVYILKSLTKGLAALDSATYISCCTILDSIVSYIFKQLQMKVSTFPNKKLRSLNQENVQFLKVVEMNSELLQSMMSSLLNNVLQEDCRNQWSMSRPLLVLILLYEDYYRSLKDRIICAQPIEKQQTMAQWFDDLMVGIERNVSSKNKEKFTQNMSTFRRDVVNLPKSTAAFSCDRPMCDGGFEPSEPESSPH</sequence>
<organism>
    <name type="scientific">Drosophila melanogaster</name>
    <name type="common">Fruit fly</name>
    <dbReference type="NCBI Taxonomy" id="7227"/>
    <lineage>
        <taxon>Eukaryota</taxon>
        <taxon>Metazoa</taxon>
        <taxon>Ecdysozoa</taxon>
        <taxon>Arthropoda</taxon>
        <taxon>Hexapoda</taxon>
        <taxon>Insecta</taxon>
        <taxon>Pterygota</taxon>
        <taxon>Neoptera</taxon>
        <taxon>Endopterygota</taxon>
        <taxon>Diptera</taxon>
        <taxon>Brachycera</taxon>
        <taxon>Muscomorpha</taxon>
        <taxon>Ephydroidea</taxon>
        <taxon>Drosophilidae</taxon>
        <taxon>Drosophila</taxon>
        <taxon>Sophophora</taxon>
    </lineage>
</organism>
<name>RBP16_DROME</name>
<feature type="chain" id="PRO_0000204715" description="Ran-binding protein 16">
    <location>
        <begin position="1"/>
        <end position="1098"/>
    </location>
</feature>
<protein>
    <recommendedName>
        <fullName>Ran-binding protein 16</fullName>
    </recommendedName>
</protein>
<proteinExistence type="evidence at transcript level"/>
<keyword id="KW-0963">Cytoplasm</keyword>
<keyword id="KW-0539">Nucleus</keyword>
<keyword id="KW-0653">Protein transport</keyword>
<keyword id="KW-1185">Reference proteome</keyword>
<keyword id="KW-0813">Transport</keyword>
<accession>Q9GQN0</accession>
<accession>Q5BI24</accession>
<accession>Q9VXL6</accession>
<accession>Q9VXL7</accession>